<reference key="1">
    <citation type="journal article" date="2005" name="PLoS Biol.">
        <title>The genome sequence of Rickettsia felis identifies the first putative conjugative plasmid in an obligate intracellular parasite.</title>
        <authorList>
            <person name="Ogata H."/>
            <person name="Renesto P."/>
            <person name="Audic S."/>
            <person name="Robert C."/>
            <person name="Blanc G."/>
            <person name="Fournier P.-E."/>
            <person name="Parinello H."/>
            <person name="Claverie J.-M."/>
            <person name="Raoult D."/>
        </authorList>
    </citation>
    <scope>NUCLEOTIDE SEQUENCE [LARGE SCALE GENOMIC DNA]</scope>
    <source>
        <strain>ATCC VR-1525 / URRWXCal2</strain>
    </source>
</reference>
<gene>
    <name type="ordered locus">RF_0080</name>
</gene>
<sequence length="259" mass="27648">MLLNIANSVGKRTIKFAQSVGSFSLFSFAAVSSIIRPPLYLSLIIRQLLFIGFHSLPVVAMTTFFSGAVLALQSYTGFSRFSAESSIATVVVLSLTRELGPVLAGLMVAGRVGASIAAEIATMRVTEQVDALYTLSTDPIKYLVFPRVIAAIITMPCLVLIGDIIGVMGGYLVGVYKLDFNSTAYLTSTFHYLEPIDVISGLVKAGVFGFIISIISCYSGYYSGKGAKGVGRATTSAVVNSSILILISNYLITELFFKV</sequence>
<protein>
    <recommendedName>
        <fullName>Probable ABC transporter permease protein RF_0080</fullName>
    </recommendedName>
</protein>
<organism>
    <name type="scientific">Rickettsia felis (strain ATCC VR-1525 / URRWXCal2)</name>
    <name type="common">Rickettsia azadi</name>
    <dbReference type="NCBI Taxonomy" id="315456"/>
    <lineage>
        <taxon>Bacteria</taxon>
        <taxon>Pseudomonadati</taxon>
        <taxon>Pseudomonadota</taxon>
        <taxon>Alphaproteobacteria</taxon>
        <taxon>Rickettsiales</taxon>
        <taxon>Rickettsiaceae</taxon>
        <taxon>Rickettsieae</taxon>
        <taxon>Rickettsia</taxon>
        <taxon>spotted fever group</taxon>
    </lineage>
</organism>
<dbReference type="EMBL" id="CP000053">
    <property type="protein sequence ID" value="AAY60931.1"/>
    <property type="molecule type" value="Genomic_DNA"/>
</dbReference>
<dbReference type="SMR" id="Q4UNC7"/>
<dbReference type="STRING" id="315456.RF_0080"/>
<dbReference type="KEGG" id="rfe:RF_0080"/>
<dbReference type="eggNOG" id="COG0767">
    <property type="taxonomic scope" value="Bacteria"/>
</dbReference>
<dbReference type="HOGENOM" id="CLU_045686_1_1_5"/>
<dbReference type="OrthoDB" id="9806241at2"/>
<dbReference type="Proteomes" id="UP000008548">
    <property type="component" value="Chromosome"/>
</dbReference>
<dbReference type="GO" id="GO:0043190">
    <property type="term" value="C:ATP-binding cassette (ABC) transporter complex"/>
    <property type="evidence" value="ECO:0007669"/>
    <property type="project" value="InterPro"/>
</dbReference>
<dbReference type="GO" id="GO:0005548">
    <property type="term" value="F:phospholipid transporter activity"/>
    <property type="evidence" value="ECO:0007669"/>
    <property type="project" value="TreeGrafter"/>
</dbReference>
<dbReference type="InterPro" id="IPR003453">
    <property type="entry name" value="ABC_MlaE_roteobac"/>
</dbReference>
<dbReference type="InterPro" id="IPR030802">
    <property type="entry name" value="Permease_MalE"/>
</dbReference>
<dbReference type="NCBIfam" id="TIGR00056">
    <property type="entry name" value="MlaE family lipid ABC transporter permease subunit"/>
    <property type="match status" value="1"/>
</dbReference>
<dbReference type="PANTHER" id="PTHR30188">
    <property type="entry name" value="ABC TRANSPORTER PERMEASE PROTEIN-RELATED"/>
    <property type="match status" value="1"/>
</dbReference>
<dbReference type="PANTHER" id="PTHR30188:SF4">
    <property type="entry name" value="PROTEIN TRIGALACTOSYLDIACYLGLYCEROL 1, CHLOROPLASTIC"/>
    <property type="match status" value="1"/>
</dbReference>
<dbReference type="Pfam" id="PF02405">
    <property type="entry name" value="MlaE"/>
    <property type="match status" value="1"/>
</dbReference>
<accession>Q4UNC7</accession>
<proteinExistence type="inferred from homology"/>
<name>Y080_RICFE</name>
<comment type="function">
    <text evidence="1">Could be part of an ABC transporter complex.</text>
</comment>
<comment type="subcellular location">
    <subcellularLocation>
        <location evidence="1">Cell inner membrane</location>
        <topology evidence="1">Multi-pass membrane protein</topology>
    </subcellularLocation>
</comment>
<comment type="similarity">
    <text evidence="3">Belongs to the MlaE permease family.</text>
</comment>
<evidence type="ECO:0000250" key="1"/>
<evidence type="ECO:0000255" key="2"/>
<evidence type="ECO:0000305" key="3"/>
<feature type="chain" id="PRO_0000272623" description="Probable ABC transporter permease protein RF_0080">
    <location>
        <begin position="1"/>
        <end position="259"/>
    </location>
</feature>
<feature type="transmembrane region" description="Helical" evidence="2">
    <location>
        <begin position="13"/>
        <end position="35"/>
    </location>
</feature>
<feature type="transmembrane region" description="Helical" evidence="2">
    <location>
        <begin position="49"/>
        <end position="69"/>
    </location>
</feature>
<feature type="transmembrane region" description="Helical" evidence="2">
    <location>
        <begin position="148"/>
        <end position="168"/>
    </location>
</feature>
<feature type="transmembrane region" description="Helical" evidence="2">
    <location>
        <begin position="195"/>
        <end position="215"/>
    </location>
</feature>
<feature type="transmembrane region" description="Helical" evidence="2">
    <location>
        <begin position="237"/>
        <end position="257"/>
    </location>
</feature>
<keyword id="KW-0997">Cell inner membrane</keyword>
<keyword id="KW-1003">Cell membrane</keyword>
<keyword id="KW-0472">Membrane</keyword>
<keyword id="KW-0812">Transmembrane</keyword>
<keyword id="KW-1133">Transmembrane helix</keyword>
<keyword id="KW-0813">Transport</keyword>